<accession>P0DJZ3</accession>
<sequence>MPPCSATSRRSLPGPTPSARRWTVPWTRTARGLTGLCLLLSLTACATAPAPAVLCEHPLIDPTTQAGLIRAVAAYQDALDLCNALNQGD</sequence>
<comment type="function">
    <text evidence="1">Component of the spanin complex that disrupts the host outer membrane and participates in cell lysis during virus exit. The spanin complex conducts the final step in host lysis by disrupting the outer membrane after holin and endolysin action have permeabilized the inner membrane and degraded the host peptidoglycans. Host outer membrane disruption is possibly due to local fusion between the inner and outer membrane performed by the spanin complex (By similarity).</text>
</comment>
<comment type="subunit">
    <text evidence="1">Interacts (via C-terminus) with the spanin inner membrane subunit (via C-terminus). Part of the spanin complex which spans the entire periplasmic space. The spanin complex is composed of spanin inner membrane subunit and spanin outer membrane subunit (By similarity).</text>
</comment>
<comment type="subcellular location">
    <subcellularLocation>
        <location evidence="1">Host cell outer membrane</location>
        <topology evidence="1">Lipid-anchor</topology>
        <orientation evidence="1">Periplasmic side</orientation>
    </subcellularLocation>
</comment>
<evidence type="ECO:0000250" key="1"/>
<evidence type="ECO:0000255" key="2"/>
<evidence type="ECO:0000256" key="3">
    <source>
        <dbReference type="SAM" id="MobiDB-lite"/>
    </source>
</evidence>
<organismHost>
    <name type="scientific">Pseudomonas aeruginosa</name>
    <dbReference type="NCBI Taxonomy" id="287"/>
</organismHost>
<organism>
    <name type="scientific">Pseudomonas phage phiKMV</name>
    <dbReference type="NCBI Taxonomy" id="204270"/>
    <lineage>
        <taxon>Viruses</taxon>
        <taxon>Duplodnaviria</taxon>
        <taxon>Heunggongvirae</taxon>
        <taxon>Uroviricota</taxon>
        <taxon>Caudoviricetes</taxon>
        <taxon>Autographiviridae</taxon>
        <taxon>Krylovirinae</taxon>
        <taxon>Phikmvvirus</taxon>
        <taxon>Phikmvvirus phiKMV</taxon>
    </lineage>
</organism>
<keyword id="KW-0204">Cytolysis</keyword>
<keyword id="KW-0578">Host cell lysis by virus</keyword>
<keyword id="KW-1033">Host cell outer membrane</keyword>
<keyword id="KW-1043">Host membrane</keyword>
<keyword id="KW-0449">Lipoprotein</keyword>
<keyword id="KW-0472">Membrane</keyword>
<keyword id="KW-1185">Reference proteome</keyword>
<keyword id="KW-0732">Signal</keyword>
<keyword id="KW-1188">Viral release from host cell</keyword>
<reference key="1">
    <citation type="journal article" date="2003" name="Virology">
        <title>The genome of bacteriophage phiKMV, a T7-like virus infecting Pseudomonas aeruginosa.</title>
        <authorList>
            <person name="Lavigne R."/>
            <person name="Burkal'tseva M.V."/>
            <person name="Robben J."/>
            <person name="Sykilinda N.N."/>
            <person name="Kurochkina L.P."/>
            <person name="Grymonprez B."/>
            <person name="Jonckx B."/>
            <person name="Krylov V.N."/>
            <person name="Mesyanzhinov V.V."/>
            <person name="Volckaert G."/>
        </authorList>
    </citation>
    <scope>NUCLEOTIDE SEQUENCE [GENOMIC DNA]</scope>
</reference>
<reference key="2">
    <citation type="journal article" date="2004" name="Cell. Mol. Life Sci.">
        <title>Identification and characterization of a highly thermostable bacteriophage lysozyme.</title>
        <authorList>
            <person name="Lavigne R."/>
            <person name="Briers Y."/>
            <person name="Hertveldt K."/>
            <person name="Robben J."/>
            <person name="Volckaert G."/>
        </authorList>
    </citation>
    <scope>NUCLEOTIDE SEQUENCE [LARGE SCALE GENOMIC DNA]</scope>
</reference>
<reference key="3">
    <citation type="journal article" date="2005" name="Protein Pept. Lett.">
        <title>Characterization of the bacteriophage PhiKMV DNA ligase.</title>
        <authorList>
            <person name="Lavigne R."/>
            <person name="Roucourt B."/>
            <person name="Hertveldt K."/>
            <person name="Volckaert G."/>
        </authorList>
    </citation>
    <scope>NUCLEOTIDE SEQUENCE [LARGE SCALE GENOMIC DNA]</scope>
</reference>
<name>SPAN2_BPKMV</name>
<gene>
    <name type="ORF">46.1</name>
</gene>
<feature type="signal peptide" evidence="2">
    <location>
        <begin position="1"/>
        <end position="47"/>
    </location>
</feature>
<feature type="chain" id="PRO_0000429262" description="Probable spanin, outer lipoprotein subunit" evidence="2">
    <location>
        <begin position="48"/>
        <end position="89"/>
    </location>
</feature>
<feature type="region of interest" description="Disordered" evidence="3">
    <location>
        <begin position="1"/>
        <end position="21"/>
    </location>
</feature>
<feature type="compositionally biased region" description="Polar residues" evidence="3">
    <location>
        <begin position="1"/>
        <end position="10"/>
    </location>
</feature>
<dbReference type="EMBL" id="AJ505558">
    <property type="status" value="NOT_ANNOTATED_CDS"/>
    <property type="molecule type" value="Genomic_DNA"/>
</dbReference>
<dbReference type="TCDB" id="1.M.1.3.1">
    <property type="family name" value="the rz/rz1 spanin1 (rz(1)) family"/>
</dbReference>
<dbReference type="Proteomes" id="UP000000842">
    <property type="component" value="Genome"/>
</dbReference>
<dbReference type="GO" id="GO:0020002">
    <property type="term" value="C:host cell plasma membrane"/>
    <property type="evidence" value="ECO:0007669"/>
    <property type="project" value="UniProtKB-SubCell"/>
</dbReference>
<dbReference type="GO" id="GO:0016020">
    <property type="term" value="C:membrane"/>
    <property type="evidence" value="ECO:0007669"/>
    <property type="project" value="UniProtKB-KW"/>
</dbReference>
<dbReference type="GO" id="GO:0031640">
    <property type="term" value="P:killing of cells of another organism"/>
    <property type="evidence" value="ECO:0007669"/>
    <property type="project" value="UniProtKB-KW"/>
</dbReference>
<proteinExistence type="inferred from homology"/>
<protein>
    <recommendedName>
        <fullName>Probable spanin, outer lipoprotein subunit</fullName>
    </recommendedName>
</protein>